<evidence type="ECO:0000255" key="1">
    <source>
        <dbReference type="HAMAP-Rule" id="MF_00339"/>
    </source>
</evidence>
<reference key="1">
    <citation type="journal article" date="2009" name="J. Bacteriol.">
        <title>Complete genome sequence and comparative genome analysis of enteropathogenic Escherichia coli O127:H6 strain E2348/69.</title>
        <authorList>
            <person name="Iguchi A."/>
            <person name="Thomson N.R."/>
            <person name="Ogura Y."/>
            <person name="Saunders D."/>
            <person name="Ooka T."/>
            <person name="Henderson I.R."/>
            <person name="Harris D."/>
            <person name="Asadulghani M."/>
            <person name="Kurokawa K."/>
            <person name="Dean P."/>
            <person name="Kenny B."/>
            <person name="Quail M.A."/>
            <person name="Thurston S."/>
            <person name="Dougan G."/>
            <person name="Hayashi T."/>
            <person name="Parkhill J."/>
            <person name="Frankel G."/>
        </authorList>
    </citation>
    <scope>NUCLEOTIDE SEQUENCE [LARGE SCALE GENOMIC DNA]</scope>
    <source>
        <strain>E2348/69 / EPEC</strain>
    </source>
</reference>
<name>PFKA_ECO27</name>
<organism>
    <name type="scientific">Escherichia coli O127:H6 (strain E2348/69 / EPEC)</name>
    <dbReference type="NCBI Taxonomy" id="574521"/>
    <lineage>
        <taxon>Bacteria</taxon>
        <taxon>Pseudomonadati</taxon>
        <taxon>Pseudomonadota</taxon>
        <taxon>Gammaproteobacteria</taxon>
        <taxon>Enterobacterales</taxon>
        <taxon>Enterobacteriaceae</taxon>
        <taxon>Escherichia</taxon>
    </lineage>
</organism>
<feature type="chain" id="PRO_1000192371" description="ATP-dependent 6-phosphofructokinase isozyme 1">
    <location>
        <begin position="1"/>
        <end position="320"/>
    </location>
</feature>
<feature type="active site" description="Proton acceptor" evidence="1">
    <location>
        <position position="128"/>
    </location>
</feature>
<feature type="binding site" evidence="1">
    <location>
        <position position="12"/>
    </location>
    <ligand>
        <name>ATP</name>
        <dbReference type="ChEBI" id="CHEBI:30616"/>
    </ligand>
</feature>
<feature type="binding site" evidence="1">
    <location>
        <begin position="22"/>
        <end position="26"/>
    </location>
    <ligand>
        <name>ADP</name>
        <dbReference type="ChEBI" id="CHEBI:456216"/>
        <note>allosteric activator; ligand shared between dimeric partners</note>
    </ligand>
</feature>
<feature type="binding site" evidence="1">
    <location>
        <begin position="55"/>
        <end position="60"/>
    </location>
    <ligand>
        <name>ADP</name>
        <dbReference type="ChEBI" id="CHEBI:456216"/>
        <note>allosteric activator; ligand shared between dimeric partners</note>
    </ligand>
</feature>
<feature type="binding site" evidence="1">
    <location>
        <begin position="73"/>
        <end position="74"/>
    </location>
    <ligand>
        <name>ATP</name>
        <dbReference type="ChEBI" id="CHEBI:30616"/>
    </ligand>
</feature>
<feature type="binding site" evidence="1">
    <location>
        <begin position="103"/>
        <end position="106"/>
    </location>
    <ligand>
        <name>ATP</name>
        <dbReference type="ChEBI" id="CHEBI:30616"/>
    </ligand>
</feature>
<feature type="binding site" evidence="1">
    <location>
        <position position="104"/>
    </location>
    <ligand>
        <name>Mg(2+)</name>
        <dbReference type="ChEBI" id="CHEBI:18420"/>
        <note>catalytic</note>
    </ligand>
</feature>
<feature type="binding site" description="in other chain" evidence="1">
    <location>
        <begin position="126"/>
        <end position="128"/>
    </location>
    <ligand>
        <name>substrate</name>
        <note>ligand shared between dimeric partners</note>
    </ligand>
</feature>
<feature type="binding site" description="in other chain" evidence="1">
    <location>
        <position position="155"/>
    </location>
    <ligand>
        <name>ADP</name>
        <dbReference type="ChEBI" id="CHEBI:456216"/>
        <note>allosteric activator; ligand shared between dimeric partners</note>
    </ligand>
</feature>
<feature type="binding site" evidence="1">
    <location>
        <position position="163"/>
    </location>
    <ligand>
        <name>substrate</name>
        <note>ligand shared between dimeric partners</note>
    </ligand>
</feature>
<feature type="binding site" description="in other chain" evidence="1">
    <location>
        <begin position="170"/>
        <end position="172"/>
    </location>
    <ligand>
        <name>substrate</name>
        <note>ligand shared between dimeric partners</note>
    </ligand>
</feature>
<feature type="binding site" description="in other chain" evidence="1">
    <location>
        <begin position="186"/>
        <end position="188"/>
    </location>
    <ligand>
        <name>ADP</name>
        <dbReference type="ChEBI" id="CHEBI:456216"/>
        <note>allosteric activator; ligand shared between dimeric partners</note>
    </ligand>
</feature>
<feature type="binding site" description="in other chain" evidence="1">
    <location>
        <position position="212"/>
    </location>
    <ligand>
        <name>ADP</name>
        <dbReference type="ChEBI" id="CHEBI:456216"/>
        <note>allosteric activator; ligand shared between dimeric partners</note>
    </ligand>
</feature>
<feature type="binding site" description="in other chain" evidence="1">
    <location>
        <begin position="214"/>
        <end position="216"/>
    </location>
    <ligand>
        <name>ADP</name>
        <dbReference type="ChEBI" id="CHEBI:456216"/>
        <note>allosteric activator; ligand shared between dimeric partners</note>
    </ligand>
</feature>
<feature type="binding site" description="in other chain" evidence="1">
    <location>
        <position position="223"/>
    </location>
    <ligand>
        <name>substrate</name>
        <note>ligand shared between dimeric partners</note>
    </ligand>
</feature>
<feature type="binding site" evidence="1">
    <location>
        <position position="244"/>
    </location>
    <ligand>
        <name>substrate</name>
        <note>ligand shared between dimeric partners</note>
    </ligand>
</feature>
<feature type="binding site" description="in other chain" evidence="1">
    <location>
        <begin position="250"/>
        <end position="253"/>
    </location>
    <ligand>
        <name>substrate</name>
        <note>ligand shared between dimeric partners</note>
    </ligand>
</feature>
<proteinExistence type="inferred from homology"/>
<keyword id="KW-0021">Allosteric enzyme</keyword>
<keyword id="KW-0067">ATP-binding</keyword>
<keyword id="KW-0963">Cytoplasm</keyword>
<keyword id="KW-0324">Glycolysis</keyword>
<keyword id="KW-0418">Kinase</keyword>
<keyword id="KW-0460">Magnesium</keyword>
<keyword id="KW-0479">Metal-binding</keyword>
<keyword id="KW-0547">Nucleotide-binding</keyword>
<keyword id="KW-1185">Reference proteome</keyword>
<keyword id="KW-0808">Transferase</keyword>
<protein>
    <recommendedName>
        <fullName evidence="1">ATP-dependent 6-phosphofructokinase isozyme 1</fullName>
        <shortName evidence="1">ATP-PFK 1</shortName>
        <shortName evidence="1">Phosphofructokinase 1</shortName>
        <ecNumber evidence="1">2.7.1.11</ecNumber>
    </recommendedName>
    <alternativeName>
        <fullName>6-phosphofructokinase isozyme I</fullName>
    </alternativeName>
</protein>
<gene>
    <name evidence="1" type="primary">pfkA</name>
    <name type="ordered locus">E2348C_4220</name>
</gene>
<comment type="function">
    <text evidence="1">Catalyzes the phosphorylation of D-fructose 6-phosphate to fructose 1,6-bisphosphate by ATP, the first committing step of glycolysis.</text>
</comment>
<comment type="catalytic activity">
    <reaction evidence="1">
        <text>beta-D-fructose 6-phosphate + ATP = beta-D-fructose 1,6-bisphosphate + ADP + H(+)</text>
        <dbReference type="Rhea" id="RHEA:16109"/>
        <dbReference type="ChEBI" id="CHEBI:15378"/>
        <dbReference type="ChEBI" id="CHEBI:30616"/>
        <dbReference type="ChEBI" id="CHEBI:32966"/>
        <dbReference type="ChEBI" id="CHEBI:57634"/>
        <dbReference type="ChEBI" id="CHEBI:456216"/>
        <dbReference type="EC" id="2.7.1.11"/>
    </reaction>
</comment>
<comment type="cofactor">
    <cofactor evidence="1">
        <name>Mg(2+)</name>
        <dbReference type="ChEBI" id="CHEBI:18420"/>
    </cofactor>
</comment>
<comment type="activity regulation">
    <text evidence="1">Allosterically activated by ADP and other diphosphonucleosides, and allosterically inhibited by phosphoenolpyruvate.</text>
</comment>
<comment type="pathway">
    <text evidence="1">Carbohydrate degradation; glycolysis; D-glyceraldehyde 3-phosphate and glycerone phosphate from D-glucose: step 3/4.</text>
</comment>
<comment type="subunit">
    <text evidence="1">Homotetramer.</text>
</comment>
<comment type="subcellular location">
    <subcellularLocation>
        <location evidence="1">Cytoplasm</location>
    </subcellularLocation>
</comment>
<comment type="similarity">
    <text evidence="1">Belongs to the phosphofructokinase type A (PFKA) family. ATP-dependent PFK group I subfamily. Prokaryotic clade 'B1' sub-subfamily.</text>
</comment>
<accession>B7UNN6</accession>
<sequence>MIKKIGVLTSGGDAPGMNAAIRGVVRSALTEGLEVMGIYDGYLGLYEDRMVQLDRYSVSDMINRGGTFLGSARFPEFRDENIRAVAIENLKKRGIDALVVIGGDGSYMGAMRLTEMGFPCIGLPGTIDNDIKGTDYTIGFFTALSTVVEAIDRLRDTSSSHQRISVVEVMGRYCGDLTLAAAIAGGCEFVVVPEVEFSREDLVNEIKAGIAKGKKHAIVAITEHMCDVDELAHFIEKETGRETRATVLGHIQRGGSPVPYDRILASRMGAYAIELLLAGYGGRCVGIQNEQLVHHDIIDAIENMKRPFKGDWLDCAKKLY</sequence>
<dbReference type="EC" id="2.7.1.11" evidence="1"/>
<dbReference type="EMBL" id="FM180568">
    <property type="protein sequence ID" value="CAS11768.1"/>
    <property type="molecule type" value="Genomic_DNA"/>
</dbReference>
<dbReference type="RefSeq" id="WP_001318165.1">
    <property type="nucleotide sequence ID" value="NC_011601.1"/>
</dbReference>
<dbReference type="SMR" id="B7UNN6"/>
<dbReference type="KEGG" id="ecg:E2348C_4220"/>
<dbReference type="HOGENOM" id="CLU_020655_0_1_6"/>
<dbReference type="UniPathway" id="UPA00109">
    <property type="reaction ID" value="UER00182"/>
</dbReference>
<dbReference type="Proteomes" id="UP000008205">
    <property type="component" value="Chromosome"/>
</dbReference>
<dbReference type="GO" id="GO:0005945">
    <property type="term" value="C:6-phosphofructokinase complex"/>
    <property type="evidence" value="ECO:0007669"/>
    <property type="project" value="TreeGrafter"/>
</dbReference>
<dbReference type="GO" id="GO:0003872">
    <property type="term" value="F:6-phosphofructokinase activity"/>
    <property type="evidence" value="ECO:0007669"/>
    <property type="project" value="UniProtKB-UniRule"/>
</dbReference>
<dbReference type="GO" id="GO:0016208">
    <property type="term" value="F:AMP binding"/>
    <property type="evidence" value="ECO:0007669"/>
    <property type="project" value="TreeGrafter"/>
</dbReference>
<dbReference type="GO" id="GO:0005524">
    <property type="term" value="F:ATP binding"/>
    <property type="evidence" value="ECO:0007669"/>
    <property type="project" value="UniProtKB-KW"/>
</dbReference>
<dbReference type="GO" id="GO:0070095">
    <property type="term" value="F:fructose-6-phosphate binding"/>
    <property type="evidence" value="ECO:0007669"/>
    <property type="project" value="TreeGrafter"/>
</dbReference>
<dbReference type="GO" id="GO:0042802">
    <property type="term" value="F:identical protein binding"/>
    <property type="evidence" value="ECO:0007669"/>
    <property type="project" value="TreeGrafter"/>
</dbReference>
<dbReference type="GO" id="GO:0046872">
    <property type="term" value="F:metal ion binding"/>
    <property type="evidence" value="ECO:0007669"/>
    <property type="project" value="UniProtKB-KW"/>
</dbReference>
<dbReference type="GO" id="GO:0048029">
    <property type="term" value="F:monosaccharide binding"/>
    <property type="evidence" value="ECO:0007669"/>
    <property type="project" value="TreeGrafter"/>
</dbReference>
<dbReference type="GO" id="GO:0061621">
    <property type="term" value="P:canonical glycolysis"/>
    <property type="evidence" value="ECO:0007669"/>
    <property type="project" value="TreeGrafter"/>
</dbReference>
<dbReference type="GO" id="GO:0030388">
    <property type="term" value="P:fructose 1,6-bisphosphate metabolic process"/>
    <property type="evidence" value="ECO:0007669"/>
    <property type="project" value="TreeGrafter"/>
</dbReference>
<dbReference type="GO" id="GO:0006002">
    <property type="term" value="P:fructose 6-phosphate metabolic process"/>
    <property type="evidence" value="ECO:0007669"/>
    <property type="project" value="InterPro"/>
</dbReference>
<dbReference type="CDD" id="cd00763">
    <property type="entry name" value="Bacterial_PFK"/>
    <property type="match status" value="1"/>
</dbReference>
<dbReference type="FunFam" id="3.40.50.450:FF:000001">
    <property type="entry name" value="ATP-dependent 6-phosphofructokinase"/>
    <property type="match status" value="1"/>
</dbReference>
<dbReference type="FunFam" id="3.40.50.460:FF:000002">
    <property type="entry name" value="ATP-dependent 6-phosphofructokinase"/>
    <property type="match status" value="1"/>
</dbReference>
<dbReference type="Gene3D" id="3.40.50.450">
    <property type="match status" value="1"/>
</dbReference>
<dbReference type="Gene3D" id="3.40.50.460">
    <property type="entry name" value="Phosphofructokinase domain"/>
    <property type="match status" value="1"/>
</dbReference>
<dbReference type="HAMAP" id="MF_00339">
    <property type="entry name" value="Phosphofructokinase_I_B1"/>
    <property type="match status" value="1"/>
</dbReference>
<dbReference type="InterPro" id="IPR022953">
    <property type="entry name" value="ATP_PFK"/>
</dbReference>
<dbReference type="InterPro" id="IPR012003">
    <property type="entry name" value="ATP_PFK_prok-type"/>
</dbReference>
<dbReference type="InterPro" id="IPR012828">
    <property type="entry name" value="PFKA_ATP_prok"/>
</dbReference>
<dbReference type="InterPro" id="IPR015912">
    <property type="entry name" value="Phosphofructokinase_CS"/>
</dbReference>
<dbReference type="InterPro" id="IPR000023">
    <property type="entry name" value="Phosphofructokinase_dom"/>
</dbReference>
<dbReference type="InterPro" id="IPR035966">
    <property type="entry name" value="PKF_sf"/>
</dbReference>
<dbReference type="NCBIfam" id="TIGR02482">
    <property type="entry name" value="PFKA_ATP"/>
    <property type="match status" value="1"/>
</dbReference>
<dbReference type="NCBIfam" id="NF002872">
    <property type="entry name" value="PRK03202.1"/>
    <property type="match status" value="1"/>
</dbReference>
<dbReference type="PANTHER" id="PTHR13697:SF4">
    <property type="entry name" value="ATP-DEPENDENT 6-PHOSPHOFRUCTOKINASE"/>
    <property type="match status" value="1"/>
</dbReference>
<dbReference type="PANTHER" id="PTHR13697">
    <property type="entry name" value="PHOSPHOFRUCTOKINASE"/>
    <property type="match status" value="1"/>
</dbReference>
<dbReference type="Pfam" id="PF00365">
    <property type="entry name" value="PFK"/>
    <property type="match status" value="1"/>
</dbReference>
<dbReference type="PIRSF" id="PIRSF000532">
    <property type="entry name" value="ATP_PFK_prok"/>
    <property type="match status" value="1"/>
</dbReference>
<dbReference type="PRINTS" id="PR00476">
    <property type="entry name" value="PHFRCTKINASE"/>
</dbReference>
<dbReference type="SUPFAM" id="SSF53784">
    <property type="entry name" value="Phosphofructokinase"/>
    <property type="match status" value="1"/>
</dbReference>
<dbReference type="PROSITE" id="PS00433">
    <property type="entry name" value="PHOSPHOFRUCTOKINASE"/>
    <property type="match status" value="1"/>
</dbReference>